<keyword id="KW-0028">Amino-acid biosynthesis</keyword>
<keyword id="KW-0057">Aromatic amino acid biosynthesis</keyword>
<keyword id="KW-0210">Decarboxylase</keyword>
<keyword id="KW-0456">Lyase</keyword>
<keyword id="KW-0822">Tryptophan biosynthesis</keyword>
<evidence type="ECO:0000255" key="1">
    <source>
        <dbReference type="HAMAP-Rule" id="MF_00134"/>
    </source>
</evidence>
<organism>
    <name type="scientific">Rhizobium johnstonii (strain DSM 114642 / LMG 32736 / 3841)</name>
    <name type="common">Rhizobium leguminosarum bv. viciae</name>
    <dbReference type="NCBI Taxonomy" id="216596"/>
    <lineage>
        <taxon>Bacteria</taxon>
        <taxon>Pseudomonadati</taxon>
        <taxon>Pseudomonadota</taxon>
        <taxon>Alphaproteobacteria</taxon>
        <taxon>Hyphomicrobiales</taxon>
        <taxon>Rhizobiaceae</taxon>
        <taxon>Rhizobium/Agrobacterium group</taxon>
        <taxon>Rhizobium</taxon>
        <taxon>Rhizobium johnstonii</taxon>
    </lineage>
</organism>
<comment type="catalytic activity">
    <reaction evidence="1">
        <text>1-(2-carboxyphenylamino)-1-deoxy-D-ribulose 5-phosphate + H(+) = (1S,2R)-1-C-(indol-3-yl)glycerol 3-phosphate + CO2 + H2O</text>
        <dbReference type="Rhea" id="RHEA:23476"/>
        <dbReference type="ChEBI" id="CHEBI:15377"/>
        <dbReference type="ChEBI" id="CHEBI:15378"/>
        <dbReference type="ChEBI" id="CHEBI:16526"/>
        <dbReference type="ChEBI" id="CHEBI:58613"/>
        <dbReference type="ChEBI" id="CHEBI:58866"/>
        <dbReference type="EC" id="4.1.1.48"/>
    </reaction>
</comment>
<comment type="pathway">
    <text evidence="1">Amino-acid biosynthesis; L-tryptophan biosynthesis; L-tryptophan from chorismate: step 4/5.</text>
</comment>
<comment type="similarity">
    <text evidence="1">Belongs to the TrpC family.</text>
</comment>
<protein>
    <recommendedName>
        <fullName evidence="1">Indole-3-glycerol phosphate synthase</fullName>
        <shortName evidence="1">IGPS</shortName>
        <ecNumber evidence="1">4.1.1.48</ecNumber>
    </recommendedName>
</protein>
<name>TRPC_RHIJ3</name>
<proteinExistence type="inferred from homology"/>
<dbReference type="EC" id="4.1.1.48" evidence="1"/>
<dbReference type="EMBL" id="AM236080">
    <property type="protein sequence ID" value="CAK07982.1"/>
    <property type="molecule type" value="Genomic_DNA"/>
</dbReference>
<dbReference type="RefSeq" id="WP_011652054.1">
    <property type="nucleotide sequence ID" value="NC_008380.1"/>
</dbReference>
<dbReference type="SMR" id="Q1MGE1"/>
<dbReference type="EnsemblBacteria" id="CAK07982">
    <property type="protein sequence ID" value="CAK07982"/>
    <property type="gene ID" value="RL2494"/>
</dbReference>
<dbReference type="KEGG" id="rle:RL2494"/>
<dbReference type="eggNOG" id="COG0134">
    <property type="taxonomic scope" value="Bacteria"/>
</dbReference>
<dbReference type="HOGENOM" id="CLU_034247_2_0_5"/>
<dbReference type="UniPathway" id="UPA00035">
    <property type="reaction ID" value="UER00043"/>
</dbReference>
<dbReference type="Proteomes" id="UP000006575">
    <property type="component" value="Chromosome"/>
</dbReference>
<dbReference type="GO" id="GO:0004425">
    <property type="term" value="F:indole-3-glycerol-phosphate synthase activity"/>
    <property type="evidence" value="ECO:0007669"/>
    <property type="project" value="UniProtKB-UniRule"/>
</dbReference>
<dbReference type="GO" id="GO:0004640">
    <property type="term" value="F:phosphoribosylanthranilate isomerase activity"/>
    <property type="evidence" value="ECO:0007669"/>
    <property type="project" value="TreeGrafter"/>
</dbReference>
<dbReference type="GO" id="GO:0000162">
    <property type="term" value="P:L-tryptophan biosynthetic process"/>
    <property type="evidence" value="ECO:0007669"/>
    <property type="project" value="UniProtKB-UniRule"/>
</dbReference>
<dbReference type="CDD" id="cd00331">
    <property type="entry name" value="IGPS"/>
    <property type="match status" value="1"/>
</dbReference>
<dbReference type="FunFam" id="3.20.20.70:FF:000024">
    <property type="entry name" value="Indole-3-glycerol phosphate synthase"/>
    <property type="match status" value="1"/>
</dbReference>
<dbReference type="Gene3D" id="3.20.20.70">
    <property type="entry name" value="Aldolase class I"/>
    <property type="match status" value="1"/>
</dbReference>
<dbReference type="HAMAP" id="MF_00134_B">
    <property type="entry name" value="IGPS_B"/>
    <property type="match status" value="1"/>
</dbReference>
<dbReference type="InterPro" id="IPR013785">
    <property type="entry name" value="Aldolase_TIM"/>
</dbReference>
<dbReference type="InterPro" id="IPR045186">
    <property type="entry name" value="Indole-3-glycerol_P_synth"/>
</dbReference>
<dbReference type="InterPro" id="IPR013798">
    <property type="entry name" value="Indole-3-glycerol_P_synth_dom"/>
</dbReference>
<dbReference type="InterPro" id="IPR001468">
    <property type="entry name" value="Indole-3-GlycerolPSynthase_CS"/>
</dbReference>
<dbReference type="InterPro" id="IPR011060">
    <property type="entry name" value="RibuloseP-bd_barrel"/>
</dbReference>
<dbReference type="NCBIfam" id="NF001370">
    <property type="entry name" value="PRK00278.1-2"/>
    <property type="match status" value="1"/>
</dbReference>
<dbReference type="NCBIfam" id="NF001373">
    <property type="entry name" value="PRK00278.1-6"/>
    <property type="match status" value="1"/>
</dbReference>
<dbReference type="NCBIfam" id="NF001377">
    <property type="entry name" value="PRK00278.2-4"/>
    <property type="match status" value="1"/>
</dbReference>
<dbReference type="PANTHER" id="PTHR22854:SF2">
    <property type="entry name" value="INDOLE-3-GLYCEROL-PHOSPHATE SYNTHASE"/>
    <property type="match status" value="1"/>
</dbReference>
<dbReference type="PANTHER" id="PTHR22854">
    <property type="entry name" value="TRYPTOPHAN BIOSYNTHESIS PROTEIN"/>
    <property type="match status" value="1"/>
</dbReference>
<dbReference type="Pfam" id="PF00218">
    <property type="entry name" value="IGPS"/>
    <property type="match status" value="1"/>
</dbReference>
<dbReference type="SUPFAM" id="SSF51366">
    <property type="entry name" value="Ribulose-phoshate binding barrel"/>
    <property type="match status" value="1"/>
</dbReference>
<dbReference type="PROSITE" id="PS00614">
    <property type="entry name" value="IGPS"/>
    <property type="match status" value="1"/>
</dbReference>
<feature type="chain" id="PRO_1000018541" description="Indole-3-glycerol phosphate synthase">
    <location>
        <begin position="1"/>
        <end position="270"/>
    </location>
</feature>
<accession>Q1MGE1</accession>
<reference key="1">
    <citation type="journal article" date="2006" name="Genome Biol.">
        <title>The genome of Rhizobium leguminosarum has recognizable core and accessory components.</title>
        <authorList>
            <person name="Young J.P.W."/>
            <person name="Crossman L.C."/>
            <person name="Johnston A.W.B."/>
            <person name="Thomson N.R."/>
            <person name="Ghazoui Z.F."/>
            <person name="Hull K.H."/>
            <person name="Wexler M."/>
            <person name="Curson A.R.J."/>
            <person name="Todd J.D."/>
            <person name="Poole P.S."/>
            <person name="Mauchline T.H."/>
            <person name="East A.K."/>
            <person name="Quail M.A."/>
            <person name="Churcher C."/>
            <person name="Arrowsmith C."/>
            <person name="Cherevach I."/>
            <person name="Chillingworth T."/>
            <person name="Clarke K."/>
            <person name="Cronin A."/>
            <person name="Davis P."/>
            <person name="Fraser A."/>
            <person name="Hance Z."/>
            <person name="Hauser H."/>
            <person name="Jagels K."/>
            <person name="Moule S."/>
            <person name="Mungall K."/>
            <person name="Norbertczak H."/>
            <person name="Rabbinowitsch E."/>
            <person name="Sanders M."/>
            <person name="Simmonds M."/>
            <person name="Whitehead S."/>
            <person name="Parkhill J."/>
        </authorList>
    </citation>
    <scope>NUCLEOTIDE SEQUENCE [LARGE SCALE GENOMIC DNA]</scope>
    <source>
        <strain>DSM 114642 / LMG 32736 / 3841</strain>
    </source>
</reference>
<gene>
    <name evidence="1" type="primary">trpC</name>
    <name type="ordered locus">RL2494</name>
</gene>
<sequence length="270" mass="29086">MTDILKKIELYKREEIAAAKATVSLADLKAMQAGQSAPRGFHKALIAKRDAGRFGLIAEIKKASPSKGLIRPDFDPPSLASAYEAGGAACLSVLTDTPSFQGAPEFLTAARSACTLPALRKDFMFETYQVHEARAWGADCILLIMASLSDDEAERLQDEAFALGMDVLVEVHDAEEMERALKLSSPLIGINNRNLRTFEVSLTVSEALAPMVSADRLLVGESGIFTHADCKRLQAVDINTFLVGESLMRKEDVAAATRALLFGEAAIAAE</sequence>